<feature type="signal peptide" evidence="2">
    <location>
        <begin position="1"/>
        <end position="21"/>
    </location>
</feature>
<feature type="chain" id="PRO_0000248881" description="Mast/stem cell growth factor receptor Kit">
    <location>
        <begin position="22"/>
        <end position="984"/>
    </location>
</feature>
<feature type="topological domain" description="Extracellular" evidence="2">
    <location>
        <begin position="22"/>
        <end position="514"/>
    </location>
</feature>
<feature type="transmembrane region" description="Helical" evidence="2">
    <location>
        <begin position="515"/>
        <end position="535"/>
    </location>
</feature>
<feature type="topological domain" description="Cytoplasmic" evidence="2">
    <location>
        <begin position="536"/>
        <end position="984"/>
    </location>
</feature>
<feature type="domain" description="Ig-like C2-type 1">
    <location>
        <begin position="23"/>
        <end position="97"/>
    </location>
</feature>
<feature type="domain" description="Ig-like C2-type 2">
    <location>
        <begin position="98"/>
        <end position="197"/>
    </location>
</feature>
<feature type="domain" description="Ig-like C2-type 3">
    <location>
        <begin position="203"/>
        <end position="300"/>
    </location>
</feature>
<feature type="domain" description="Ig-like C2-type 4">
    <location>
        <begin position="311"/>
        <end position="395"/>
    </location>
</feature>
<feature type="domain" description="Ig-like C2-type 5">
    <location>
        <begin position="398"/>
        <end position="498"/>
    </location>
</feature>
<feature type="domain" description="Protein kinase" evidence="4">
    <location>
        <begin position="579"/>
        <end position="926"/>
    </location>
</feature>
<feature type="region of interest" description="Disordered" evidence="6">
    <location>
        <begin position="711"/>
        <end position="749"/>
    </location>
</feature>
<feature type="region of interest" description="Disordered" evidence="6">
    <location>
        <begin position="936"/>
        <end position="963"/>
    </location>
</feature>
<feature type="compositionally biased region" description="Low complexity" evidence="6">
    <location>
        <begin position="711"/>
        <end position="723"/>
    </location>
</feature>
<feature type="compositionally biased region" description="Acidic residues" evidence="6">
    <location>
        <begin position="737"/>
        <end position="749"/>
    </location>
</feature>
<feature type="compositionally biased region" description="Polar residues" evidence="6">
    <location>
        <begin position="944"/>
        <end position="960"/>
    </location>
</feature>
<feature type="active site" description="Proton acceptor" evidence="4 5">
    <location>
        <position position="781"/>
    </location>
</feature>
<feature type="binding site" evidence="1">
    <location>
        <position position="558"/>
    </location>
    <ligand>
        <name>Mg(2+)</name>
        <dbReference type="ChEBI" id="CHEBI:18420"/>
    </ligand>
</feature>
<feature type="binding site" evidence="4">
    <location>
        <begin position="586"/>
        <end position="593"/>
    </location>
    <ligand>
        <name>ATP</name>
        <dbReference type="ChEBI" id="CHEBI:30616"/>
    </ligand>
</feature>
<feature type="binding site" evidence="4">
    <location>
        <position position="613"/>
    </location>
    <ligand>
        <name>ATP</name>
        <dbReference type="ChEBI" id="CHEBI:30616"/>
    </ligand>
</feature>
<feature type="binding site" evidence="4">
    <location>
        <begin position="661"/>
        <end position="667"/>
    </location>
    <ligand>
        <name>ATP</name>
        <dbReference type="ChEBI" id="CHEBI:30616"/>
    </ligand>
</feature>
<feature type="binding site" evidence="4">
    <location>
        <position position="785"/>
    </location>
    <ligand>
        <name>ATP</name>
        <dbReference type="ChEBI" id="CHEBI:30616"/>
    </ligand>
</feature>
<feature type="binding site" evidence="1">
    <location>
        <position position="786"/>
    </location>
    <ligand>
        <name>Mg(2+)</name>
        <dbReference type="ChEBI" id="CHEBI:18420"/>
    </ligand>
</feature>
<feature type="binding site" evidence="1">
    <location>
        <position position="799"/>
    </location>
    <ligand>
        <name>Mg(2+)</name>
        <dbReference type="ChEBI" id="CHEBI:18420"/>
    </ligand>
</feature>
<feature type="modified residue" description="Phosphotyrosine; by autocatalysis" evidence="1">
    <location>
        <position position="558"/>
    </location>
</feature>
<feature type="modified residue" description="Phosphotyrosine; by autocatalysis" evidence="1">
    <location>
        <position position="560"/>
    </location>
</feature>
<feature type="modified residue" description="Phosphotyrosine; by autocatalysis" evidence="1">
    <location>
        <position position="690"/>
    </location>
</feature>
<feature type="modified residue" description="Phosphotyrosine; by autocatalysis" evidence="1">
    <location>
        <position position="707"/>
    </location>
</feature>
<feature type="modified residue" description="Phosphotyrosine; by autocatalysis" evidence="1">
    <location>
        <position position="812"/>
    </location>
</feature>
<feature type="modified residue" description="Phosphotyrosine; by autocatalysis" evidence="1">
    <location>
        <position position="925"/>
    </location>
</feature>
<feature type="glycosylation site" description="N-linked (GlcNAc...) asparagine" evidence="2">
    <location>
        <position position="227"/>
    </location>
</feature>
<feature type="glycosylation site" description="N-linked (GlcNAc...) asparagine" evidence="2">
    <location>
        <position position="260"/>
    </location>
</feature>
<feature type="glycosylation site" description="N-linked (GlcNAc...) asparagine" evidence="2">
    <location>
        <position position="314"/>
    </location>
</feature>
<feature type="glycosylation site" description="N-linked (GlcNAc...) asparagine" evidence="2">
    <location>
        <position position="351"/>
    </location>
</feature>
<feature type="glycosylation site" description="N-linked (GlcNAc...) asparagine" evidence="2">
    <location>
        <position position="395"/>
    </location>
</feature>
<feature type="glycosylation site" description="N-linked (GlcNAc...) asparagine" evidence="2">
    <location>
        <position position="448"/>
    </location>
</feature>
<feature type="glycosylation site" description="N-linked (GlcNAc...) asparagine" evidence="2">
    <location>
        <position position="476"/>
    </location>
</feature>
<feature type="disulfide bond" evidence="3">
    <location>
        <begin position="44"/>
        <end position="87"/>
    </location>
</feature>
<feature type="disulfide bond" evidence="3">
    <location>
        <begin position="129"/>
        <end position="178"/>
    </location>
</feature>
<feature type="disulfide bond" evidence="3">
    <location>
        <begin position="144"/>
        <end position="175"/>
    </location>
</feature>
<feature type="disulfide bond" evidence="3">
    <location>
        <begin position="226"/>
        <end position="284"/>
    </location>
</feature>
<feature type="disulfide bond" evidence="3">
    <location>
        <begin position="421"/>
        <end position="487"/>
    </location>
</feature>
<reference key="1">
    <citation type="journal article" date="2002" name="DNA Seq.">
        <title>Characterization of the platelet-derived growth factor receptor alpha and c-kit genes in the pufferfish Fugu rubripes.</title>
        <authorList>
            <person name="Williams H."/>
            <person name="Brenner S."/>
            <person name="Venkatesh B."/>
        </authorList>
    </citation>
    <scope>NUCLEOTIDE SEQUENCE [GENOMIC DNA]</scope>
</reference>
<protein>
    <recommendedName>
        <fullName>Mast/stem cell growth factor receptor Kit</fullName>
        <shortName>SCFR</shortName>
        <ecNumber>2.7.10.1</ecNumber>
    </recommendedName>
    <alternativeName>
        <fullName>Tyrosine-protein kinase kit</fullName>
    </alternativeName>
</protein>
<name>KIT_TAKRU</name>
<proteinExistence type="inferred from homology"/>
<accession>Q8AXC6</accession>
<dbReference type="EC" id="2.7.10.1"/>
<dbReference type="EMBL" id="AF456419">
    <property type="protein sequence ID" value="AAN87555.1"/>
    <property type="molecule type" value="Genomic_DNA"/>
</dbReference>
<dbReference type="RefSeq" id="XP_011612846.1">
    <property type="nucleotide sequence ID" value="XM_011614544.2"/>
</dbReference>
<dbReference type="SMR" id="Q8AXC6"/>
<dbReference type="FunCoup" id="Q8AXC6">
    <property type="interactions" value="805"/>
</dbReference>
<dbReference type="STRING" id="31033.ENSTRUP00000063495"/>
<dbReference type="GlyCosmos" id="Q8AXC6">
    <property type="glycosylation" value="7 sites, No reported glycans"/>
</dbReference>
<dbReference type="GeneID" id="101073765"/>
<dbReference type="CTD" id="30256"/>
<dbReference type="eggNOG" id="KOG0200">
    <property type="taxonomic scope" value="Eukaryota"/>
</dbReference>
<dbReference type="InParanoid" id="Q8AXC6"/>
<dbReference type="OrthoDB" id="6077854at2759"/>
<dbReference type="Proteomes" id="UP000005226">
    <property type="component" value="Unplaced"/>
</dbReference>
<dbReference type="GO" id="GO:0005886">
    <property type="term" value="C:plasma membrane"/>
    <property type="evidence" value="ECO:0007669"/>
    <property type="project" value="UniProtKB-SubCell"/>
</dbReference>
<dbReference type="GO" id="GO:0043235">
    <property type="term" value="C:receptor complex"/>
    <property type="evidence" value="ECO:0007669"/>
    <property type="project" value="TreeGrafter"/>
</dbReference>
<dbReference type="GO" id="GO:0005524">
    <property type="term" value="F:ATP binding"/>
    <property type="evidence" value="ECO:0007669"/>
    <property type="project" value="UniProtKB-KW"/>
</dbReference>
<dbReference type="GO" id="GO:0019955">
    <property type="term" value="F:cytokine binding"/>
    <property type="evidence" value="ECO:0007669"/>
    <property type="project" value="InterPro"/>
</dbReference>
<dbReference type="GO" id="GO:0019838">
    <property type="term" value="F:growth factor binding"/>
    <property type="evidence" value="ECO:0007669"/>
    <property type="project" value="TreeGrafter"/>
</dbReference>
<dbReference type="GO" id="GO:0046872">
    <property type="term" value="F:metal ion binding"/>
    <property type="evidence" value="ECO:0007669"/>
    <property type="project" value="UniProtKB-KW"/>
</dbReference>
<dbReference type="GO" id="GO:0004714">
    <property type="term" value="F:transmembrane receptor protein tyrosine kinase activity"/>
    <property type="evidence" value="ECO:0007669"/>
    <property type="project" value="UniProtKB-EC"/>
</dbReference>
<dbReference type="GO" id="GO:0030183">
    <property type="term" value="P:B cell differentiation"/>
    <property type="evidence" value="ECO:0007669"/>
    <property type="project" value="TreeGrafter"/>
</dbReference>
<dbReference type="GO" id="GO:0038093">
    <property type="term" value="P:Fc receptor signaling pathway"/>
    <property type="evidence" value="ECO:0007669"/>
    <property type="project" value="InterPro"/>
</dbReference>
<dbReference type="GO" id="GO:0002244">
    <property type="term" value="P:hematopoietic progenitor cell differentiation"/>
    <property type="evidence" value="ECO:0007669"/>
    <property type="project" value="TreeGrafter"/>
</dbReference>
<dbReference type="GO" id="GO:0038109">
    <property type="term" value="P:Kit signaling pathway"/>
    <property type="evidence" value="ECO:0007669"/>
    <property type="project" value="InterPro"/>
</dbReference>
<dbReference type="GO" id="GO:0030335">
    <property type="term" value="P:positive regulation of cell migration"/>
    <property type="evidence" value="ECO:0007669"/>
    <property type="project" value="TreeGrafter"/>
</dbReference>
<dbReference type="GO" id="GO:0046427">
    <property type="term" value="P:positive regulation of receptor signaling pathway via JAK-STAT"/>
    <property type="evidence" value="ECO:0007669"/>
    <property type="project" value="TreeGrafter"/>
</dbReference>
<dbReference type="FunFam" id="1.10.510.10:FF:000177">
    <property type="entry name" value="Mast/stem cell growth factor receptor"/>
    <property type="match status" value="1"/>
</dbReference>
<dbReference type="FunFam" id="3.30.200.20:FF:000025">
    <property type="entry name" value="Platelet-derived growth factor receptor alpha"/>
    <property type="match status" value="1"/>
</dbReference>
<dbReference type="Gene3D" id="2.60.40.10">
    <property type="entry name" value="Immunoglobulins"/>
    <property type="match status" value="5"/>
</dbReference>
<dbReference type="Gene3D" id="3.30.200.20">
    <property type="entry name" value="Phosphorylase Kinase, domain 1"/>
    <property type="match status" value="1"/>
</dbReference>
<dbReference type="Gene3D" id="1.10.510.10">
    <property type="entry name" value="Transferase(Phosphotransferase) domain 1"/>
    <property type="match status" value="1"/>
</dbReference>
<dbReference type="InterPro" id="IPR007110">
    <property type="entry name" value="Ig-like_dom"/>
</dbReference>
<dbReference type="InterPro" id="IPR036179">
    <property type="entry name" value="Ig-like_dom_sf"/>
</dbReference>
<dbReference type="InterPro" id="IPR013783">
    <property type="entry name" value="Ig-like_fold"/>
</dbReference>
<dbReference type="InterPro" id="IPR013098">
    <property type="entry name" value="Ig_I-set"/>
</dbReference>
<dbReference type="InterPro" id="IPR003599">
    <property type="entry name" value="Ig_sub"/>
</dbReference>
<dbReference type="InterPro" id="IPR003598">
    <property type="entry name" value="Ig_sub2"/>
</dbReference>
<dbReference type="InterPro" id="IPR011009">
    <property type="entry name" value="Kinase-like_dom_sf"/>
</dbReference>
<dbReference type="InterPro" id="IPR000719">
    <property type="entry name" value="Prot_kinase_dom"/>
</dbReference>
<dbReference type="InterPro" id="IPR017441">
    <property type="entry name" value="Protein_kinase_ATP_BS"/>
</dbReference>
<dbReference type="InterPro" id="IPR050122">
    <property type="entry name" value="RTK"/>
</dbReference>
<dbReference type="InterPro" id="IPR027263">
    <property type="entry name" value="SCGF_receptor"/>
</dbReference>
<dbReference type="InterPro" id="IPR001245">
    <property type="entry name" value="Ser-Thr/Tyr_kinase_cat_dom"/>
</dbReference>
<dbReference type="InterPro" id="IPR008266">
    <property type="entry name" value="Tyr_kinase_AS"/>
</dbReference>
<dbReference type="InterPro" id="IPR020635">
    <property type="entry name" value="Tyr_kinase_cat_dom"/>
</dbReference>
<dbReference type="InterPro" id="IPR001824">
    <property type="entry name" value="Tyr_kinase_rcpt_3_CS"/>
</dbReference>
<dbReference type="PANTHER" id="PTHR24416:SF46">
    <property type="entry name" value="MAST_STEM CELL GROWTH FACTOR RECEPTOR KIT"/>
    <property type="match status" value="1"/>
</dbReference>
<dbReference type="PANTHER" id="PTHR24416">
    <property type="entry name" value="TYROSINE-PROTEIN KINASE RECEPTOR"/>
    <property type="match status" value="1"/>
</dbReference>
<dbReference type="Pfam" id="PF07679">
    <property type="entry name" value="I-set"/>
    <property type="match status" value="2"/>
</dbReference>
<dbReference type="Pfam" id="PF25305">
    <property type="entry name" value="Ig_PDGFR_d4"/>
    <property type="match status" value="1"/>
</dbReference>
<dbReference type="Pfam" id="PF07714">
    <property type="entry name" value="PK_Tyr_Ser-Thr"/>
    <property type="match status" value="1"/>
</dbReference>
<dbReference type="PIRSF" id="PIRSF500951">
    <property type="entry name" value="SCGF_recepter"/>
    <property type="match status" value="1"/>
</dbReference>
<dbReference type="PIRSF" id="PIRSF000615">
    <property type="entry name" value="TyrPK_CSF1-R"/>
    <property type="match status" value="1"/>
</dbReference>
<dbReference type="SMART" id="SM00409">
    <property type="entry name" value="IG"/>
    <property type="match status" value="4"/>
</dbReference>
<dbReference type="SMART" id="SM00408">
    <property type="entry name" value="IGc2"/>
    <property type="match status" value="2"/>
</dbReference>
<dbReference type="SMART" id="SM00219">
    <property type="entry name" value="TyrKc"/>
    <property type="match status" value="1"/>
</dbReference>
<dbReference type="SUPFAM" id="SSF48726">
    <property type="entry name" value="Immunoglobulin"/>
    <property type="match status" value="4"/>
</dbReference>
<dbReference type="SUPFAM" id="SSF56112">
    <property type="entry name" value="Protein kinase-like (PK-like)"/>
    <property type="match status" value="1"/>
</dbReference>
<dbReference type="PROSITE" id="PS50835">
    <property type="entry name" value="IG_LIKE"/>
    <property type="match status" value="3"/>
</dbReference>
<dbReference type="PROSITE" id="PS00107">
    <property type="entry name" value="PROTEIN_KINASE_ATP"/>
    <property type="match status" value="1"/>
</dbReference>
<dbReference type="PROSITE" id="PS50011">
    <property type="entry name" value="PROTEIN_KINASE_DOM"/>
    <property type="match status" value="1"/>
</dbReference>
<dbReference type="PROSITE" id="PS00109">
    <property type="entry name" value="PROTEIN_KINASE_TYR"/>
    <property type="match status" value="1"/>
</dbReference>
<dbReference type="PROSITE" id="PS00240">
    <property type="entry name" value="RECEPTOR_TYR_KIN_III"/>
    <property type="match status" value="1"/>
</dbReference>
<comment type="function">
    <text evidence="1">Tyrosine-protein kinase that acts as a cell-surface receptor for the cytokine kitlg/scf and plays an essential role in the regulation of cell survival and proliferation, hematopoiesis, stem cell maintenance, gametogenesis, mast cell development, migration and function, and in melanogenesis.</text>
</comment>
<comment type="catalytic activity">
    <reaction evidence="5">
        <text>L-tyrosyl-[protein] + ATP = O-phospho-L-tyrosyl-[protein] + ADP + H(+)</text>
        <dbReference type="Rhea" id="RHEA:10596"/>
        <dbReference type="Rhea" id="RHEA-COMP:10136"/>
        <dbReference type="Rhea" id="RHEA-COMP:20101"/>
        <dbReference type="ChEBI" id="CHEBI:15378"/>
        <dbReference type="ChEBI" id="CHEBI:30616"/>
        <dbReference type="ChEBI" id="CHEBI:46858"/>
        <dbReference type="ChEBI" id="CHEBI:61978"/>
        <dbReference type="ChEBI" id="CHEBI:456216"/>
        <dbReference type="EC" id="2.7.10.1"/>
    </reaction>
</comment>
<comment type="subcellular location">
    <subcellularLocation>
        <location evidence="1">Cell membrane</location>
        <topology evidence="1">Single-pass type I membrane protein</topology>
    </subcellularLocation>
</comment>
<comment type="PTM">
    <text evidence="1">Ubiquitinated. Rapidly ubiquitinated after autophosphorylation induced by kitlg/scf binding, leading to internalization and degradation.</text>
</comment>
<comment type="PTM">
    <text evidence="1">Autophosphorylated on tyrosine residues. Phosphorylated tyrosine residues are important for interaction with specific binding partners (By similarity).</text>
</comment>
<comment type="similarity">
    <text evidence="4">Belongs to the protein kinase superfamily. Tyr protein kinase family. CSF-1/PDGF receptor subfamily.</text>
</comment>
<evidence type="ECO:0000250" key="1"/>
<evidence type="ECO:0000255" key="2"/>
<evidence type="ECO:0000255" key="3">
    <source>
        <dbReference type="PROSITE-ProRule" id="PRU00114"/>
    </source>
</evidence>
<evidence type="ECO:0000255" key="4">
    <source>
        <dbReference type="PROSITE-ProRule" id="PRU00159"/>
    </source>
</evidence>
<evidence type="ECO:0000255" key="5">
    <source>
        <dbReference type="PROSITE-ProRule" id="PRU10028"/>
    </source>
</evidence>
<evidence type="ECO:0000256" key="6">
    <source>
        <dbReference type="SAM" id="MobiDB-lite"/>
    </source>
</evidence>
<keyword id="KW-0067">ATP-binding</keyword>
<keyword id="KW-1003">Cell membrane</keyword>
<keyword id="KW-1015">Disulfide bond</keyword>
<keyword id="KW-0325">Glycoprotein</keyword>
<keyword id="KW-0393">Immunoglobulin domain</keyword>
<keyword id="KW-0418">Kinase</keyword>
<keyword id="KW-0460">Magnesium</keyword>
<keyword id="KW-0472">Membrane</keyword>
<keyword id="KW-0479">Metal-binding</keyword>
<keyword id="KW-0547">Nucleotide-binding</keyword>
<keyword id="KW-0597">Phosphoprotein</keyword>
<keyword id="KW-0675">Receptor</keyword>
<keyword id="KW-1185">Reference proteome</keyword>
<keyword id="KW-0677">Repeat</keyword>
<keyword id="KW-0732">Signal</keyword>
<keyword id="KW-0808">Transferase</keyword>
<keyword id="KW-0812">Transmembrane</keyword>
<keyword id="KW-1133">Transmembrane helix</keyword>
<keyword id="KW-0829">Tyrosine-protein kinase</keyword>
<keyword id="KW-0832">Ubl conjugation</keyword>
<organism>
    <name type="scientific">Takifugu rubripes</name>
    <name type="common">Japanese pufferfish</name>
    <name type="synonym">Fugu rubripes</name>
    <dbReference type="NCBI Taxonomy" id="31033"/>
    <lineage>
        <taxon>Eukaryota</taxon>
        <taxon>Metazoa</taxon>
        <taxon>Chordata</taxon>
        <taxon>Craniata</taxon>
        <taxon>Vertebrata</taxon>
        <taxon>Euteleostomi</taxon>
        <taxon>Actinopterygii</taxon>
        <taxon>Neopterygii</taxon>
        <taxon>Teleostei</taxon>
        <taxon>Neoteleostei</taxon>
        <taxon>Acanthomorphata</taxon>
        <taxon>Eupercaria</taxon>
        <taxon>Tetraodontiformes</taxon>
        <taxon>Tetradontoidea</taxon>
        <taxon>Tetraodontidae</taxon>
        <taxon>Takifugu</taxon>
    </lineage>
</organism>
<sequence length="984" mass="110732">MEYHWILLCVSLCFTFHPGDTKPTITPAGTYVVVSLNAPLELQCQGEKAMQWQREERPKVRGETKVDGKSTLYIPKAHPAHMGRYICLEETSQERASIYIYVKDPDNPFRKSMVSNILSREGDSASIPCLATDPSLENLQLKTCSSKALASGLHFSPSLEQGIIIHNTQKSYEGCYVCTGRLKETNVRSHDYHLTVRPVPVAPPVIMMQAPKRVILIRDESLYLTCNTTNVNGNIKLKWVAPLGSQPAKVDGSSRILTENFTQARSATLHIAAVRIQDTGRYQCEAENEKGVSTQSVWLDVFEKGFMYSNPVNNGTIQVRAGESLLLSVSIEAYPMPRSASWSFMGRGLHNTSDHVITTRSHEYTYSSELKLVRLKMSEGGVYTFQASNGDASVNHTFTIFVISKPEIVSHEGPVDGQVRCVAEGFPAPQITWYYCEQPYARCSQQVNATQEEQNVITVTLFSPLFGKTEVESRVNISRGRFSTLECVATVEGEQAFTLFSISERTISHDLFSPLLIGSVSAACILCLILIVLFYKYMQKPKYQIQWKVIEGIHGNNYVYIDPTQLPYDHQWEFPRKNLRFGKTLGSGAFGKVVEATAYGLANEDSMMTVAVKMLKSSAHSTEKEALMSELKVLIYLGNHINIVNLLGACTVGGPTLVITEYCCFGDLLNFLRRKRESFICFKLEEDCHYRNIMLQREMAGDSLNGYMTMRPSAAGKPSSSSSSEKRRSLREGSPYVEEDSESEMFDEDSLSLDTEDLLSFSYQVAKGMEFLTSKNCIHRDLAARNILLTQGRVAKICDFGLARDINTDSNYVVKGNARLPVKWMSPESIFECVYTFESDVWSYGILLWEIFSLGNSPYPGMPVDAKFYKLIKEGYRMDAPEFAPSEMYQIMRSCWDADPLNRPPFRKVVERIEQQLSDTTKHIYLNFSSRVPVMPRGREESSTHSMASQPFNSAGNNSPPSRPLLLHHEVFLEGTEPFRVQRV</sequence>
<gene>
    <name type="primary">kit</name>
</gene>